<organism>
    <name type="scientific">Cyanophora paradoxa</name>
    <dbReference type="NCBI Taxonomy" id="2762"/>
    <lineage>
        <taxon>Eukaryota</taxon>
        <taxon>Glaucocystophyceae</taxon>
        <taxon>Cyanophoraceae</taxon>
        <taxon>Cyanophora</taxon>
    </lineage>
</organism>
<feature type="transit peptide" description="Cyanelle" evidence="2">
    <location>
        <begin position="1"/>
        <end position="60"/>
    </location>
</feature>
<feature type="chain" id="PRO_0000030687" description="Cytochrome b6-f complex iron-sulfur subunit 1, cyanelle">
    <location>
        <begin position="61"/>
        <end position="239"/>
    </location>
</feature>
<feature type="transmembrane region" description="Helical" evidence="2">
    <location>
        <begin position="81"/>
        <end position="101"/>
    </location>
</feature>
<feature type="domain" description="Rieske">
    <location>
        <begin position="125"/>
        <end position="221"/>
    </location>
</feature>
<feature type="binding site" evidence="1">
    <location>
        <position position="167"/>
    </location>
    <ligand>
        <name>[2Fe-2S] cluster</name>
        <dbReference type="ChEBI" id="CHEBI:190135"/>
    </ligand>
</feature>
<feature type="binding site" evidence="1">
    <location>
        <position position="169"/>
    </location>
    <ligand>
        <name>[2Fe-2S] cluster</name>
        <dbReference type="ChEBI" id="CHEBI:190135"/>
    </ligand>
</feature>
<feature type="binding site" evidence="1">
    <location>
        <position position="185"/>
    </location>
    <ligand>
        <name>[2Fe-2S] cluster</name>
        <dbReference type="ChEBI" id="CHEBI:190135"/>
    </ligand>
</feature>
<feature type="binding site" evidence="1">
    <location>
        <position position="188"/>
    </location>
    <ligand>
        <name>[2Fe-2S] cluster</name>
        <dbReference type="ChEBI" id="CHEBI:190135"/>
    </ligand>
</feature>
<feature type="disulfide bond" evidence="1">
    <location>
        <begin position="172"/>
        <end position="187"/>
    </location>
</feature>
<keyword id="KW-0001">2Fe-2S</keyword>
<keyword id="KW-0194">Cyanelle</keyword>
<keyword id="KW-1015">Disulfide bond</keyword>
<keyword id="KW-0249">Electron transport</keyword>
<keyword id="KW-0408">Iron</keyword>
<keyword id="KW-0411">Iron-sulfur</keyword>
<keyword id="KW-0472">Membrane</keyword>
<keyword id="KW-0479">Metal-binding</keyword>
<keyword id="KW-0934">Plastid</keyword>
<keyword id="KW-0793">Thylakoid</keyword>
<keyword id="KW-0809">Transit peptide</keyword>
<keyword id="KW-1278">Translocase</keyword>
<keyword id="KW-0812">Transmembrane</keyword>
<keyword id="KW-1133">Transmembrane helix</keyword>
<keyword id="KW-0813">Transport</keyword>
<gene>
    <name type="primary">petC-1</name>
</gene>
<proteinExistence type="evidence at transcript level"/>
<comment type="function">
    <text evidence="1">Component of the cytochrome b6-f complex, which mediates electron transfer between photosystem II (PSII) and photosystem I (PSI), cyclic electron flow around PSI, and state transitions.</text>
</comment>
<comment type="catalytic activity">
    <reaction>
        <text>2 oxidized [plastocyanin] + a plastoquinol + 2 H(+)(in) = 2 reduced [plastocyanin] + a plastoquinone + 4 H(+)(out)</text>
        <dbReference type="Rhea" id="RHEA:22148"/>
        <dbReference type="Rhea" id="RHEA-COMP:9561"/>
        <dbReference type="Rhea" id="RHEA-COMP:9562"/>
        <dbReference type="Rhea" id="RHEA-COMP:10039"/>
        <dbReference type="Rhea" id="RHEA-COMP:10040"/>
        <dbReference type="ChEBI" id="CHEBI:15378"/>
        <dbReference type="ChEBI" id="CHEBI:17757"/>
        <dbReference type="ChEBI" id="CHEBI:29036"/>
        <dbReference type="ChEBI" id="CHEBI:49552"/>
        <dbReference type="ChEBI" id="CHEBI:62192"/>
        <dbReference type="EC" id="7.1.1.6"/>
    </reaction>
</comment>
<comment type="cofactor">
    <cofactor evidence="1">
        <name>[2Fe-2S] cluster</name>
        <dbReference type="ChEBI" id="CHEBI:190135"/>
    </cofactor>
    <text evidence="1">Binds 1 [2Fe-2S] cluster per subunit.</text>
</comment>
<comment type="subunit">
    <text evidence="1">The 4 large subunits of the cytochrome b6-f complex are cytochrome b6, subunit IV (17 kDa polypeptide, petD), cytochrome f and the Rieske protein, while the 4 small subunits are petG, petL, petM and petN. The complex functions as a dimer (By similarity).</text>
</comment>
<comment type="subcellular location">
    <subcellularLocation>
        <location evidence="1">Plastid</location>
        <location evidence="1">Cyanelle thylakoid membrane</location>
        <topology evidence="1">Single-pass membrane protein</topology>
    </subcellularLocation>
    <text evidence="1">The transmembrane helix obliquely spans the membrane in one monomer, and its extrinsic C-terminal domain is part of the other monomer.</text>
</comment>
<comment type="miscellaneous">
    <text>This protein is 1 of 2 subunits of the cytochrome b6-f complex that are encoded in the nucleus.</text>
</comment>
<comment type="miscellaneous">
    <text>The Rieske iron-sulfur protein is a high potential 2Fe-2S protein.</text>
</comment>
<comment type="similarity">
    <text evidence="3">Belongs to the Rieske iron-sulfur protein family.</text>
</comment>
<protein>
    <recommendedName>
        <fullName>Cytochrome b6-f complex iron-sulfur subunit 1, cyanelle</fullName>
        <ecNumber>7.1.1.6</ecNumber>
    </recommendedName>
    <alternativeName>
        <fullName>Plastohydroquinone:plastocyanin oxidoreductase iron-sulfur protein 1</fullName>
    </alternativeName>
    <alternativeName>
        <fullName>Rieske iron-sulfur protein 1</fullName>
        <shortName>ISP 1</shortName>
        <shortName>RISP 1</shortName>
    </alternativeName>
</protein>
<dbReference type="EC" id="7.1.1.6"/>
<dbReference type="EMBL" id="AJ784852">
    <property type="protein sequence ID" value="CAH04960.1"/>
    <property type="molecule type" value="mRNA"/>
</dbReference>
<dbReference type="SMR" id="Q5CC93"/>
<dbReference type="GO" id="GO:0033115">
    <property type="term" value="C:cyanelle thylakoid membrane"/>
    <property type="evidence" value="ECO:0007669"/>
    <property type="project" value="UniProtKB-SubCell"/>
</dbReference>
<dbReference type="GO" id="GO:0051537">
    <property type="term" value="F:2 iron, 2 sulfur cluster binding"/>
    <property type="evidence" value="ECO:0007669"/>
    <property type="project" value="UniProtKB-KW"/>
</dbReference>
<dbReference type="GO" id="GO:0045158">
    <property type="term" value="F:electron transporter, transferring electrons within cytochrome b6/f complex of photosystem II activity"/>
    <property type="evidence" value="ECO:0007669"/>
    <property type="project" value="InterPro"/>
</dbReference>
<dbReference type="GO" id="GO:0046872">
    <property type="term" value="F:metal ion binding"/>
    <property type="evidence" value="ECO:0007669"/>
    <property type="project" value="UniProtKB-KW"/>
</dbReference>
<dbReference type="GO" id="GO:0009496">
    <property type="term" value="F:plastoquinol--plastocyanin reductase activity"/>
    <property type="evidence" value="ECO:0007669"/>
    <property type="project" value="UniProtKB-EC"/>
</dbReference>
<dbReference type="CDD" id="cd03471">
    <property type="entry name" value="Rieske_cytochrome_b6f"/>
    <property type="match status" value="1"/>
</dbReference>
<dbReference type="FunFam" id="2.102.10.10:FF:000007">
    <property type="entry name" value="Cytochrome b6-f complex iron-sulfur subunit"/>
    <property type="match status" value="1"/>
</dbReference>
<dbReference type="Gene3D" id="2.102.10.10">
    <property type="entry name" value="Rieske [2Fe-2S] iron-sulphur domain"/>
    <property type="match status" value="1"/>
</dbReference>
<dbReference type="Gene3D" id="1.20.5.700">
    <property type="entry name" value="Single helix bin"/>
    <property type="match status" value="1"/>
</dbReference>
<dbReference type="HAMAP" id="MF_01335">
    <property type="entry name" value="Cytb6_f_Rieske"/>
    <property type="match status" value="1"/>
</dbReference>
<dbReference type="InterPro" id="IPR023960">
    <property type="entry name" value="Cyt_b6_f_Rieske"/>
</dbReference>
<dbReference type="InterPro" id="IPR017941">
    <property type="entry name" value="Rieske_2Fe-2S"/>
</dbReference>
<dbReference type="InterPro" id="IPR036922">
    <property type="entry name" value="Rieske_2Fe-2S_sf"/>
</dbReference>
<dbReference type="InterPro" id="IPR014349">
    <property type="entry name" value="Rieske_Fe-S_prot"/>
</dbReference>
<dbReference type="InterPro" id="IPR005805">
    <property type="entry name" value="Rieske_Fe-S_prot_C"/>
</dbReference>
<dbReference type="NCBIfam" id="NF045928">
    <property type="entry name" value="Cytb6fFeSPetC"/>
    <property type="match status" value="1"/>
</dbReference>
<dbReference type="NCBIfam" id="NF010001">
    <property type="entry name" value="PRK13474.1"/>
    <property type="match status" value="1"/>
</dbReference>
<dbReference type="PANTHER" id="PTHR10134">
    <property type="entry name" value="CYTOCHROME B-C1 COMPLEX SUBUNIT RIESKE, MITOCHONDRIAL"/>
    <property type="match status" value="1"/>
</dbReference>
<dbReference type="Pfam" id="PF00355">
    <property type="entry name" value="Rieske"/>
    <property type="match status" value="1"/>
</dbReference>
<dbReference type="Pfam" id="PF25471">
    <property type="entry name" value="TM_PetC"/>
    <property type="match status" value="1"/>
</dbReference>
<dbReference type="PRINTS" id="PR00162">
    <property type="entry name" value="RIESKE"/>
</dbReference>
<dbReference type="SUPFAM" id="SSF50022">
    <property type="entry name" value="ISP domain"/>
    <property type="match status" value="1"/>
</dbReference>
<dbReference type="PROSITE" id="PS51296">
    <property type="entry name" value="RIESKE"/>
    <property type="match status" value="1"/>
</dbReference>
<reference key="1">
    <citation type="journal article" date="2005" name="FEBS J.">
        <title>Conservative sorting in a primitive plastid. The cyanelle of Cyanophora paradoxa.</title>
        <authorList>
            <person name="Steiner J.M."/>
            <person name="Berghoefer J."/>
            <person name="Yusa F."/>
            <person name="Pompe J.A."/>
            <person name="Kloesgen R.B."/>
            <person name="Loeffelhardt W."/>
        </authorList>
    </citation>
    <scope>NUCLEOTIDE SEQUENCE [MRNA]</scope>
    <scope>PROTEIN IMPORT INTO ISOLATED CYANELLES</scope>
    <source>
        <strain>UTEX LB 555 / Pringsheim</strain>
    </source>
</reference>
<accession>Q5CC93</accession>
<sequence>MAFTTTAVVAPRGAKITGQSSTCAIQNGKTVAVGTSKQVGSFKPVFAAAKPAKETTFSVSCSAASDDVPDMGKRKLMNLLLLGAIAGPVAGAGGPFVSFLVPPKAGGGAGAGQAAKDALGNDVKVSSWLETHKPGDRSLAQGLKGDATYLIVKEDGTLENYGLNAVCTHLGCVVPWNASENKFMCPCHGSQYDRTGKVVRGPAPLSLALAHVSVLEDGVVAFEPWTETDFRTNTAPWWK</sequence>
<name>UCRIA_CYAPA</name>
<evidence type="ECO:0000250" key="1"/>
<evidence type="ECO:0000255" key="2"/>
<evidence type="ECO:0000255" key="3">
    <source>
        <dbReference type="HAMAP-Rule" id="MF_01335"/>
    </source>
</evidence>